<reference key="1">
    <citation type="journal article" date="1995" name="J. Gen. Virol.">
        <title>The complete sequence of a cucumber mosaic virus from Ixora that is deficient in the replication of satellite RNAs.</title>
        <authorList>
            <person name="McGarvey P.B."/>
            <person name="Tousignant M."/>
            <person name="Geletka L."/>
            <person name="Cellini F."/>
            <person name="Kaper J.M."/>
        </authorList>
    </citation>
    <scope>NUCLEOTIDE SEQUENCE [GENOMIC RNA]</scope>
</reference>
<keyword id="KW-0007">Acetylation</keyword>
<keyword id="KW-0167">Capsid protein</keyword>
<keyword id="KW-0687">Ribonucleoprotein</keyword>
<keyword id="KW-0694">RNA-binding</keyword>
<keyword id="KW-1142">T=3 icosahedral capsid protein</keyword>
<keyword id="KW-0543">Viral nucleoprotein</keyword>
<keyword id="KW-0946">Virion</keyword>
<feature type="chain" id="PRO_0000083208" description="Capsid protein">
    <location>
        <begin position="1"/>
        <end position="218"/>
    </location>
</feature>
<feature type="region of interest" description="Disordered" evidence="2">
    <location>
        <begin position="1"/>
        <end position="30"/>
    </location>
</feature>
<feature type="compositionally biased region" description="Low complexity" evidence="2">
    <location>
        <begin position="1"/>
        <end position="10"/>
    </location>
</feature>
<feature type="compositionally biased region" description="Basic residues" evidence="2">
    <location>
        <begin position="11"/>
        <end position="21"/>
    </location>
</feature>
<feature type="modified residue" description="N-acetylmethionine; by host" evidence="1">
    <location>
        <position position="1"/>
    </location>
</feature>
<protein>
    <recommendedName>
        <fullName>Capsid protein</fullName>
        <shortName>CP</shortName>
    </recommendedName>
    <alternativeName>
        <fullName>Coat protein</fullName>
    </alternativeName>
</protein>
<comment type="function">
    <text evidence="1">Capsid protein. Probably binds RNA and plays a role in packaging (By similarity).</text>
</comment>
<comment type="subcellular location">
    <subcellularLocation>
        <location evidence="3">Virion</location>
    </subcellularLocation>
</comment>
<comment type="domain">
    <text evidence="1">The N-terminal arginine-rich stretch does not seem to be the major RNA-binding region that allows formation of an infectious ribonucleoprotein complex.</text>
</comment>
<comment type="similarity">
    <text evidence="3">Belongs to the cucumovirus capsid protein family.</text>
</comment>
<gene>
    <name type="ORF">ORF3b</name>
</gene>
<evidence type="ECO:0000250" key="1"/>
<evidence type="ECO:0000256" key="2">
    <source>
        <dbReference type="SAM" id="MobiDB-lite"/>
    </source>
</evidence>
<evidence type="ECO:0000305" key="3"/>
<organismHost>
    <name type="scientific">Cucumis sativus</name>
    <name type="common">Cucumber</name>
    <dbReference type="NCBI Taxonomy" id="3659"/>
</organismHost>
<organismHost>
    <name type="scientific">Solanum lycopersicum</name>
    <name type="common">Tomato</name>
    <name type="synonym">Lycopersicon esculentum</name>
    <dbReference type="NCBI Taxonomy" id="4081"/>
</organismHost>
<organismHost>
    <name type="scientific">Spinacia oleracea</name>
    <name type="common">Spinach</name>
    <dbReference type="NCBI Taxonomy" id="3562"/>
</organismHost>
<dbReference type="EMBL" id="U20219">
    <property type="protein sequence ID" value="AAC54619.1"/>
    <property type="molecule type" value="Genomic_RNA"/>
</dbReference>
<dbReference type="PIR" id="D71392">
    <property type="entry name" value="D71392"/>
</dbReference>
<dbReference type="SMR" id="Q66120"/>
<dbReference type="Proteomes" id="UP000246998">
    <property type="component" value="Genome"/>
</dbReference>
<dbReference type="GO" id="GO:1990904">
    <property type="term" value="C:ribonucleoprotein complex"/>
    <property type="evidence" value="ECO:0007669"/>
    <property type="project" value="UniProtKB-KW"/>
</dbReference>
<dbReference type="GO" id="GO:0039617">
    <property type="term" value="C:T=3 icosahedral viral capsid"/>
    <property type="evidence" value="ECO:0007669"/>
    <property type="project" value="UniProtKB-KW"/>
</dbReference>
<dbReference type="GO" id="GO:0019013">
    <property type="term" value="C:viral nucleocapsid"/>
    <property type="evidence" value="ECO:0007669"/>
    <property type="project" value="UniProtKB-KW"/>
</dbReference>
<dbReference type="GO" id="GO:0003723">
    <property type="term" value="F:RNA binding"/>
    <property type="evidence" value="ECO:0007669"/>
    <property type="project" value="UniProtKB-KW"/>
</dbReference>
<dbReference type="GO" id="GO:0005198">
    <property type="term" value="F:structural molecule activity"/>
    <property type="evidence" value="ECO:0007669"/>
    <property type="project" value="InterPro"/>
</dbReference>
<dbReference type="Gene3D" id="2.60.120.530">
    <property type="entry name" value="Cucumovirus coat protein, subunit A"/>
    <property type="match status" value="1"/>
</dbReference>
<dbReference type="InterPro" id="IPR000247">
    <property type="entry name" value="Cucumovirus_coat"/>
</dbReference>
<dbReference type="InterPro" id="IPR037137">
    <property type="entry name" value="Cucumovirus_coat_Asu_sf"/>
</dbReference>
<dbReference type="Pfam" id="PF00760">
    <property type="entry name" value="Cucumo_coat"/>
    <property type="match status" value="1"/>
</dbReference>
<dbReference type="PRINTS" id="PR00222">
    <property type="entry name" value="CUCUMOCOAT"/>
</dbReference>
<dbReference type="SUPFAM" id="SSF88633">
    <property type="entry name" value="Positive stranded ssRNA viruses"/>
    <property type="match status" value="1"/>
</dbReference>
<name>CAPSD_CMVIX</name>
<proteinExistence type="inferred from homology"/>
<organism>
    <name type="scientific">Cucumber mosaic virus (strain Ixora)</name>
    <name type="common">CMV</name>
    <dbReference type="NCBI Taxonomy" id="117114"/>
    <lineage>
        <taxon>Viruses</taxon>
        <taxon>Riboviria</taxon>
        <taxon>Orthornavirae</taxon>
        <taxon>Kitrinoviricota</taxon>
        <taxon>Alsuviricetes</taxon>
        <taxon>Martellivirales</taxon>
        <taxon>Bromoviridae</taxon>
        <taxon>Cucumovirus</taxon>
        <taxon>Cucumber mosaic virus</taxon>
    </lineage>
</organism>
<sequence>MDKSESASAGRNRRRRPRRGSRSASSSSDANFRVLSQQLSRLNKTLAAGRPTINHPTFVGSERCKPGYTFTSITLKPPKIDRGSYYGKRLLLPDSVAEFDKKLVSRIQIRVNPLPKFDSTVWVTVRKVPASSDLSVTAISAMFADGASPVLVYQYAASGIQANNKLLYDLSAMRADIGDMRKYAVLVYSKDDALETDELVLHVDIEHQRIPTSRVLPV</sequence>
<accession>Q66120</accession>